<accession>A7ZC73</accession>
<feature type="chain" id="PRO_0000365855" description="ATP synthase subunit c">
    <location>
        <begin position="1"/>
        <end position="100"/>
    </location>
</feature>
<feature type="transmembrane region" description="Helical" evidence="1">
    <location>
        <begin position="27"/>
        <end position="47"/>
    </location>
</feature>
<feature type="transmembrane region" description="Helical" evidence="1">
    <location>
        <begin position="72"/>
        <end position="92"/>
    </location>
</feature>
<feature type="site" description="Reversibly protonated during proton transport" evidence="1">
    <location>
        <position position="79"/>
    </location>
</feature>
<keyword id="KW-0066">ATP synthesis</keyword>
<keyword id="KW-0997">Cell inner membrane</keyword>
<keyword id="KW-1003">Cell membrane</keyword>
<keyword id="KW-0138">CF(0)</keyword>
<keyword id="KW-0375">Hydrogen ion transport</keyword>
<keyword id="KW-0406">Ion transport</keyword>
<keyword id="KW-0446">Lipid-binding</keyword>
<keyword id="KW-0472">Membrane</keyword>
<keyword id="KW-0812">Transmembrane</keyword>
<keyword id="KW-1133">Transmembrane helix</keyword>
<keyword id="KW-0813">Transport</keyword>
<protein>
    <recommendedName>
        <fullName evidence="1">ATP synthase subunit c</fullName>
    </recommendedName>
    <alternativeName>
        <fullName evidence="1">ATP synthase F(0) sector subunit c</fullName>
    </alternativeName>
    <alternativeName>
        <fullName evidence="1">F-type ATPase subunit c</fullName>
        <shortName evidence="1">F-ATPase subunit c</shortName>
    </alternativeName>
    <alternativeName>
        <fullName evidence="1">Lipid-binding protein</fullName>
    </alternativeName>
</protein>
<proteinExistence type="inferred from homology"/>
<comment type="function">
    <text evidence="1">F(1)F(0) ATP synthase produces ATP from ADP in the presence of a proton or sodium gradient. F-type ATPases consist of two structural domains, F(1) containing the extramembraneous catalytic core and F(0) containing the membrane proton channel, linked together by a central stalk and a peripheral stalk. During catalysis, ATP synthesis in the catalytic domain of F(1) is coupled via a rotary mechanism of the central stalk subunits to proton translocation.</text>
</comment>
<comment type="function">
    <text evidence="1">Key component of the F(0) channel; it plays a direct role in translocation across the membrane. A homomeric c-ring of between 10-14 subunits forms the central stalk rotor element with the F(1) delta and epsilon subunits.</text>
</comment>
<comment type="subunit">
    <text evidence="1">F-type ATPases have 2 components, F(1) - the catalytic core - and F(0) - the membrane proton channel. F(1) has five subunits: alpha(3), beta(3), gamma(1), delta(1), epsilon(1). F(0) has three main subunits: a(1), b(2) and c(10-14). The alpha and beta chains form an alternating ring which encloses part of the gamma chain. F(1) is attached to F(0) by a central stalk formed by the gamma and epsilon chains, while a peripheral stalk is formed by the delta and b chains.</text>
</comment>
<comment type="subcellular location">
    <subcellularLocation>
        <location evidence="1">Cell inner membrane</location>
        <topology evidence="1">Multi-pass membrane protein</topology>
    </subcellularLocation>
</comment>
<comment type="similarity">
    <text evidence="1">Belongs to the ATPase C chain family.</text>
</comment>
<reference key="1">
    <citation type="submission" date="2007-10" db="EMBL/GenBank/DDBJ databases">
        <title>Genome sequence of Campylobacter concisus 13826 isolated from human feces.</title>
        <authorList>
            <person name="Fouts D.E."/>
            <person name="Mongodin E.F."/>
            <person name="Puiu D."/>
            <person name="Sebastian Y."/>
            <person name="Miller W.G."/>
            <person name="Mandrell R.E."/>
            <person name="On S."/>
            <person name="Nelson K.E."/>
        </authorList>
    </citation>
    <scope>NUCLEOTIDE SEQUENCE [LARGE SCALE GENOMIC DNA]</scope>
    <source>
        <strain>13826</strain>
    </source>
</reference>
<sequence length="100" mass="10079">MKKIVFLILGLAAFAFGADGEMIRSYSVIAGGIGLGLAALGGAIGMGNTAAATISGTARNPGVGSKLMTTMFIALAMIEAQVIYALVITLIVLYANPMLG</sequence>
<dbReference type="EMBL" id="CP000792">
    <property type="protein sequence ID" value="EAT98982.1"/>
    <property type="molecule type" value="Genomic_DNA"/>
</dbReference>
<dbReference type="RefSeq" id="WP_004317263.1">
    <property type="nucleotide sequence ID" value="NC_009802.2"/>
</dbReference>
<dbReference type="SMR" id="A7ZC73"/>
<dbReference type="STRING" id="360104.CCC13826_1502"/>
<dbReference type="KEGG" id="cco:CCC13826_1502"/>
<dbReference type="eggNOG" id="COG0636">
    <property type="taxonomic scope" value="Bacteria"/>
</dbReference>
<dbReference type="HOGENOM" id="CLU_148047_0_1_7"/>
<dbReference type="OrthoDB" id="5339943at2"/>
<dbReference type="Proteomes" id="UP000001121">
    <property type="component" value="Chromosome"/>
</dbReference>
<dbReference type="GO" id="GO:0005886">
    <property type="term" value="C:plasma membrane"/>
    <property type="evidence" value="ECO:0007669"/>
    <property type="project" value="UniProtKB-SubCell"/>
</dbReference>
<dbReference type="GO" id="GO:0045259">
    <property type="term" value="C:proton-transporting ATP synthase complex"/>
    <property type="evidence" value="ECO:0007669"/>
    <property type="project" value="UniProtKB-KW"/>
</dbReference>
<dbReference type="GO" id="GO:0033177">
    <property type="term" value="C:proton-transporting two-sector ATPase complex, proton-transporting domain"/>
    <property type="evidence" value="ECO:0007669"/>
    <property type="project" value="InterPro"/>
</dbReference>
<dbReference type="GO" id="GO:0008289">
    <property type="term" value="F:lipid binding"/>
    <property type="evidence" value="ECO:0007669"/>
    <property type="project" value="UniProtKB-KW"/>
</dbReference>
<dbReference type="GO" id="GO:0046933">
    <property type="term" value="F:proton-transporting ATP synthase activity, rotational mechanism"/>
    <property type="evidence" value="ECO:0007669"/>
    <property type="project" value="UniProtKB-UniRule"/>
</dbReference>
<dbReference type="CDD" id="cd18121">
    <property type="entry name" value="ATP-synt_Fo_c"/>
    <property type="match status" value="1"/>
</dbReference>
<dbReference type="FunFam" id="1.20.20.10:FF:000002">
    <property type="entry name" value="ATP synthase subunit c"/>
    <property type="match status" value="1"/>
</dbReference>
<dbReference type="Gene3D" id="1.20.20.10">
    <property type="entry name" value="F1F0 ATP synthase subunit C"/>
    <property type="match status" value="1"/>
</dbReference>
<dbReference type="HAMAP" id="MF_01396">
    <property type="entry name" value="ATP_synth_c_bact"/>
    <property type="match status" value="1"/>
</dbReference>
<dbReference type="InterPro" id="IPR005953">
    <property type="entry name" value="ATP_synth_csu_bac/chlpt"/>
</dbReference>
<dbReference type="InterPro" id="IPR000454">
    <property type="entry name" value="ATP_synth_F0_csu"/>
</dbReference>
<dbReference type="InterPro" id="IPR020537">
    <property type="entry name" value="ATP_synth_F0_csu_DDCD_BS"/>
</dbReference>
<dbReference type="InterPro" id="IPR038662">
    <property type="entry name" value="ATP_synth_F0_csu_sf"/>
</dbReference>
<dbReference type="InterPro" id="IPR002379">
    <property type="entry name" value="ATPase_proteolipid_c-like_dom"/>
</dbReference>
<dbReference type="InterPro" id="IPR035921">
    <property type="entry name" value="F/V-ATP_Csub_sf"/>
</dbReference>
<dbReference type="NCBIfam" id="TIGR01260">
    <property type="entry name" value="ATP_synt_c"/>
    <property type="match status" value="1"/>
</dbReference>
<dbReference type="NCBIfam" id="NF006295">
    <property type="entry name" value="PRK08482.1"/>
    <property type="match status" value="1"/>
</dbReference>
<dbReference type="Pfam" id="PF00137">
    <property type="entry name" value="ATP-synt_C"/>
    <property type="match status" value="1"/>
</dbReference>
<dbReference type="PRINTS" id="PR00124">
    <property type="entry name" value="ATPASEC"/>
</dbReference>
<dbReference type="SUPFAM" id="SSF81333">
    <property type="entry name" value="F1F0 ATP synthase subunit C"/>
    <property type="match status" value="1"/>
</dbReference>
<dbReference type="PROSITE" id="PS00605">
    <property type="entry name" value="ATPASE_C"/>
    <property type="match status" value="1"/>
</dbReference>
<name>ATPL_CAMC1</name>
<gene>
    <name evidence="1" type="primary">atpE</name>
    <name type="ordered locus">Ccon26_04820</name>
    <name type="ORF">CCC13826_1502</name>
</gene>
<evidence type="ECO:0000255" key="1">
    <source>
        <dbReference type="HAMAP-Rule" id="MF_01396"/>
    </source>
</evidence>
<organism>
    <name type="scientific">Campylobacter concisus (strain 13826)</name>
    <dbReference type="NCBI Taxonomy" id="360104"/>
    <lineage>
        <taxon>Bacteria</taxon>
        <taxon>Pseudomonadati</taxon>
        <taxon>Campylobacterota</taxon>
        <taxon>Epsilonproteobacteria</taxon>
        <taxon>Campylobacterales</taxon>
        <taxon>Campylobacteraceae</taxon>
        <taxon>Campylobacter</taxon>
    </lineage>
</organism>